<comment type="function">
    <text evidence="1">Catalyzes the reversible transfer of the terminal phosphate group between ATP and AMP. Plays an important role in cellular energy homeostasis and in adenine nucleotide metabolism.</text>
</comment>
<comment type="catalytic activity">
    <reaction evidence="1">
        <text>AMP + ATP = 2 ADP</text>
        <dbReference type="Rhea" id="RHEA:12973"/>
        <dbReference type="ChEBI" id="CHEBI:30616"/>
        <dbReference type="ChEBI" id="CHEBI:456215"/>
        <dbReference type="ChEBI" id="CHEBI:456216"/>
        <dbReference type="EC" id="2.7.4.3"/>
    </reaction>
</comment>
<comment type="pathway">
    <text evidence="1">Purine metabolism; AMP biosynthesis via salvage pathway; AMP from ADP: step 1/1.</text>
</comment>
<comment type="subunit">
    <text evidence="1">Monomer.</text>
</comment>
<comment type="subcellular location">
    <subcellularLocation>
        <location evidence="1">Cytoplasm</location>
    </subcellularLocation>
</comment>
<comment type="domain">
    <text evidence="1">Consists of three domains, a large central CORE domain and two small peripheral domains, NMPbind and LID, which undergo movements during catalysis. The LID domain closes over the site of phosphoryl transfer upon ATP binding. Assembling and dissambling the active center during each catalytic cycle provides an effective means to prevent ATP hydrolysis. Some bacteria have evolved a zinc-coordinating structure that stabilizes the LID domain.</text>
</comment>
<comment type="similarity">
    <text evidence="1">Belongs to the adenylate kinase family.</text>
</comment>
<evidence type="ECO:0000255" key="1">
    <source>
        <dbReference type="HAMAP-Rule" id="MF_00235"/>
    </source>
</evidence>
<organism>
    <name type="scientific">Novosphingobium aromaticivorans (strain ATCC 700278 / DSM 12444 / CCUG 56034 / CIP 105152 / NBRC 16084 / F199)</name>
    <dbReference type="NCBI Taxonomy" id="279238"/>
    <lineage>
        <taxon>Bacteria</taxon>
        <taxon>Pseudomonadati</taxon>
        <taxon>Pseudomonadota</taxon>
        <taxon>Alphaproteobacteria</taxon>
        <taxon>Sphingomonadales</taxon>
        <taxon>Sphingomonadaceae</taxon>
        <taxon>Novosphingobium</taxon>
    </lineage>
</organism>
<sequence length="216" mass="23296">MNIILLGPPGAGKGTQAQRLVERHGMKQLSTGDMLRAAVKAETPVGLKAKAVMEAGQLVSDEIVSALIGDELDAMPAGQGAIFDGYPRTAPQAESLDAILESRGRKLDHVIELDVNEDALVERITGRYTCATCGKGYHDKFEKPAVEGTCDKCGGHEFKRRPDDNEETVRTRMAEYRAKTAPILPIYESRGIVSRVDGMADMDDVTAAIEAILAAR</sequence>
<keyword id="KW-0067">ATP-binding</keyword>
<keyword id="KW-0963">Cytoplasm</keyword>
<keyword id="KW-0418">Kinase</keyword>
<keyword id="KW-0479">Metal-binding</keyword>
<keyword id="KW-0545">Nucleotide biosynthesis</keyword>
<keyword id="KW-0547">Nucleotide-binding</keyword>
<keyword id="KW-1185">Reference proteome</keyword>
<keyword id="KW-0808">Transferase</keyword>
<keyword id="KW-0862">Zinc</keyword>
<feature type="chain" id="PRO_1000021751" description="Adenylate kinase">
    <location>
        <begin position="1"/>
        <end position="216"/>
    </location>
</feature>
<feature type="region of interest" description="NMP" evidence="1">
    <location>
        <begin position="30"/>
        <end position="59"/>
    </location>
</feature>
<feature type="region of interest" description="LID" evidence="1">
    <location>
        <begin position="126"/>
        <end position="164"/>
    </location>
</feature>
<feature type="binding site" evidence="1">
    <location>
        <begin position="10"/>
        <end position="15"/>
    </location>
    <ligand>
        <name>ATP</name>
        <dbReference type="ChEBI" id="CHEBI:30616"/>
    </ligand>
</feature>
<feature type="binding site" evidence="1">
    <location>
        <position position="31"/>
    </location>
    <ligand>
        <name>AMP</name>
        <dbReference type="ChEBI" id="CHEBI:456215"/>
    </ligand>
</feature>
<feature type="binding site" evidence="1">
    <location>
        <position position="36"/>
    </location>
    <ligand>
        <name>AMP</name>
        <dbReference type="ChEBI" id="CHEBI:456215"/>
    </ligand>
</feature>
<feature type="binding site" evidence="1">
    <location>
        <begin position="57"/>
        <end position="59"/>
    </location>
    <ligand>
        <name>AMP</name>
        <dbReference type="ChEBI" id="CHEBI:456215"/>
    </ligand>
</feature>
<feature type="binding site" evidence="1">
    <location>
        <begin position="85"/>
        <end position="88"/>
    </location>
    <ligand>
        <name>AMP</name>
        <dbReference type="ChEBI" id="CHEBI:456215"/>
    </ligand>
</feature>
<feature type="binding site" evidence="1">
    <location>
        <position position="92"/>
    </location>
    <ligand>
        <name>AMP</name>
        <dbReference type="ChEBI" id="CHEBI:456215"/>
    </ligand>
</feature>
<feature type="binding site" evidence="1">
    <location>
        <position position="127"/>
    </location>
    <ligand>
        <name>ATP</name>
        <dbReference type="ChEBI" id="CHEBI:30616"/>
    </ligand>
</feature>
<feature type="binding site" evidence="1">
    <location>
        <position position="130"/>
    </location>
    <ligand>
        <name>Zn(2+)</name>
        <dbReference type="ChEBI" id="CHEBI:29105"/>
        <note>structural</note>
    </ligand>
</feature>
<feature type="binding site" evidence="1">
    <location>
        <position position="133"/>
    </location>
    <ligand>
        <name>Zn(2+)</name>
        <dbReference type="ChEBI" id="CHEBI:29105"/>
        <note>structural</note>
    </ligand>
</feature>
<feature type="binding site" evidence="1">
    <location>
        <position position="150"/>
    </location>
    <ligand>
        <name>Zn(2+)</name>
        <dbReference type="ChEBI" id="CHEBI:29105"/>
        <note>structural</note>
    </ligand>
</feature>
<feature type="binding site" evidence="1">
    <location>
        <position position="153"/>
    </location>
    <ligand>
        <name>Zn(2+)</name>
        <dbReference type="ChEBI" id="CHEBI:29105"/>
        <note>structural</note>
    </ligand>
</feature>
<feature type="binding site" evidence="1">
    <location>
        <position position="161"/>
    </location>
    <ligand>
        <name>AMP</name>
        <dbReference type="ChEBI" id="CHEBI:456215"/>
    </ligand>
</feature>
<feature type="binding site" evidence="1">
    <location>
        <position position="172"/>
    </location>
    <ligand>
        <name>AMP</name>
        <dbReference type="ChEBI" id="CHEBI:456215"/>
    </ligand>
</feature>
<feature type="binding site" evidence="1">
    <location>
        <position position="200"/>
    </location>
    <ligand>
        <name>ATP</name>
        <dbReference type="ChEBI" id="CHEBI:30616"/>
    </ligand>
</feature>
<accession>Q2G8V9</accession>
<reference key="1">
    <citation type="submission" date="2006-01" db="EMBL/GenBank/DDBJ databases">
        <title>Complete sequence of Novosphingobium aromaticivorans DSM 12444.</title>
        <authorList>
            <consortium name="US DOE Joint Genome Institute"/>
            <person name="Copeland A."/>
            <person name="Lucas S."/>
            <person name="Lapidus A."/>
            <person name="Barry K."/>
            <person name="Detter J.C."/>
            <person name="Glavina T."/>
            <person name="Hammon N."/>
            <person name="Israni S."/>
            <person name="Pitluck S."/>
            <person name="Chain P."/>
            <person name="Malfatti S."/>
            <person name="Shin M."/>
            <person name="Vergez L."/>
            <person name="Schmutz J."/>
            <person name="Larimer F."/>
            <person name="Land M."/>
            <person name="Kyrpides N."/>
            <person name="Ivanova N."/>
            <person name="Fredrickson J."/>
            <person name="Balkwill D."/>
            <person name="Romine M.F."/>
            <person name="Richardson P."/>
        </authorList>
    </citation>
    <scope>NUCLEOTIDE SEQUENCE [LARGE SCALE GENOMIC DNA]</scope>
    <source>
        <strain>ATCC 700278 / DSM 12444 / CCUG 56034 / CIP 105152 / NBRC 16084 / F199</strain>
    </source>
</reference>
<protein>
    <recommendedName>
        <fullName evidence="1">Adenylate kinase</fullName>
        <shortName evidence="1">AK</shortName>
        <ecNumber evidence="1">2.7.4.3</ecNumber>
    </recommendedName>
    <alternativeName>
        <fullName evidence="1">ATP-AMP transphosphorylase</fullName>
    </alternativeName>
    <alternativeName>
        <fullName evidence="1">ATP:AMP phosphotransferase</fullName>
    </alternativeName>
    <alternativeName>
        <fullName evidence="1">Adenylate monophosphate kinase</fullName>
    </alternativeName>
</protein>
<gene>
    <name evidence="1" type="primary">adk</name>
    <name type="ordered locus">Saro_1270</name>
</gene>
<name>KAD_NOVAD</name>
<dbReference type="EC" id="2.7.4.3" evidence="1"/>
<dbReference type="EMBL" id="CP000248">
    <property type="protein sequence ID" value="ABD25714.1"/>
    <property type="molecule type" value="Genomic_DNA"/>
</dbReference>
<dbReference type="RefSeq" id="WP_011444928.1">
    <property type="nucleotide sequence ID" value="NC_007794.1"/>
</dbReference>
<dbReference type="SMR" id="Q2G8V9"/>
<dbReference type="STRING" id="279238.Saro_1270"/>
<dbReference type="KEGG" id="nar:Saro_1270"/>
<dbReference type="eggNOG" id="COG0563">
    <property type="taxonomic scope" value="Bacteria"/>
</dbReference>
<dbReference type="HOGENOM" id="CLU_032354_1_2_5"/>
<dbReference type="UniPathway" id="UPA00588">
    <property type="reaction ID" value="UER00649"/>
</dbReference>
<dbReference type="Proteomes" id="UP000009134">
    <property type="component" value="Chromosome"/>
</dbReference>
<dbReference type="GO" id="GO:0005737">
    <property type="term" value="C:cytoplasm"/>
    <property type="evidence" value="ECO:0007669"/>
    <property type="project" value="UniProtKB-SubCell"/>
</dbReference>
<dbReference type="GO" id="GO:0004017">
    <property type="term" value="F:adenylate kinase activity"/>
    <property type="evidence" value="ECO:0007669"/>
    <property type="project" value="UniProtKB-UniRule"/>
</dbReference>
<dbReference type="GO" id="GO:0005524">
    <property type="term" value="F:ATP binding"/>
    <property type="evidence" value="ECO:0007669"/>
    <property type="project" value="UniProtKB-UniRule"/>
</dbReference>
<dbReference type="GO" id="GO:0008270">
    <property type="term" value="F:zinc ion binding"/>
    <property type="evidence" value="ECO:0007669"/>
    <property type="project" value="UniProtKB-UniRule"/>
</dbReference>
<dbReference type="GO" id="GO:0044209">
    <property type="term" value="P:AMP salvage"/>
    <property type="evidence" value="ECO:0007669"/>
    <property type="project" value="UniProtKB-UniRule"/>
</dbReference>
<dbReference type="CDD" id="cd01428">
    <property type="entry name" value="ADK"/>
    <property type="match status" value="1"/>
</dbReference>
<dbReference type="FunFam" id="3.40.50.300:FF:000106">
    <property type="entry name" value="Adenylate kinase mitochondrial"/>
    <property type="match status" value="1"/>
</dbReference>
<dbReference type="Gene3D" id="3.40.50.300">
    <property type="entry name" value="P-loop containing nucleotide triphosphate hydrolases"/>
    <property type="match status" value="1"/>
</dbReference>
<dbReference type="HAMAP" id="MF_00235">
    <property type="entry name" value="Adenylate_kinase_Adk"/>
    <property type="match status" value="1"/>
</dbReference>
<dbReference type="InterPro" id="IPR006259">
    <property type="entry name" value="Adenyl_kin_sub"/>
</dbReference>
<dbReference type="InterPro" id="IPR000850">
    <property type="entry name" value="Adenylat/UMP-CMP_kin"/>
</dbReference>
<dbReference type="InterPro" id="IPR033690">
    <property type="entry name" value="Adenylat_kinase_CS"/>
</dbReference>
<dbReference type="InterPro" id="IPR007862">
    <property type="entry name" value="Adenylate_kinase_lid-dom"/>
</dbReference>
<dbReference type="InterPro" id="IPR036193">
    <property type="entry name" value="ADK_active_lid_dom_sf"/>
</dbReference>
<dbReference type="InterPro" id="IPR027417">
    <property type="entry name" value="P-loop_NTPase"/>
</dbReference>
<dbReference type="NCBIfam" id="TIGR01351">
    <property type="entry name" value="adk"/>
    <property type="match status" value="1"/>
</dbReference>
<dbReference type="NCBIfam" id="NF001380">
    <property type="entry name" value="PRK00279.1-2"/>
    <property type="match status" value="1"/>
</dbReference>
<dbReference type="NCBIfam" id="NF001381">
    <property type="entry name" value="PRK00279.1-3"/>
    <property type="match status" value="1"/>
</dbReference>
<dbReference type="NCBIfam" id="NF011100">
    <property type="entry name" value="PRK14527.1"/>
    <property type="match status" value="1"/>
</dbReference>
<dbReference type="NCBIfam" id="NF011105">
    <property type="entry name" value="PRK14532.1"/>
    <property type="match status" value="1"/>
</dbReference>
<dbReference type="PANTHER" id="PTHR23359">
    <property type="entry name" value="NUCLEOTIDE KINASE"/>
    <property type="match status" value="1"/>
</dbReference>
<dbReference type="Pfam" id="PF00406">
    <property type="entry name" value="ADK"/>
    <property type="match status" value="1"/>
</dbReference>
<dbReference type="Pfam" id="PF05191">
    <property type="entry name" value="ADK_lid"/>
    <property type="match status" value="1"/>
</dbReference>
<dbReference type="PRINTS" id="PR00094">
    <property type="entry name" value="ADENYLTKNASE"/>
</dbReference>
<dbReference type="SUPFAM" id="SSF57774">
    <property type="entry name" value="Microbial and mitochondrial ADK, insert 'zinc finger' domain"/>
    <property type="match status" value="1"/>
</dbReference>
<dbReference type="SUPFAM" id="SSF52540">
    <property type="entry name" value="P-loop containing nucleoside triphosphate hydrolases"/>
    <property type="match status" value="1"/>
</dbReference>
<dbReference type="PROSITE" id="PS00113">
    <property type="entry name" value="ADENYLATE_KINASE"/>
    <property type="match status" value="1"/>
</dbReference>
<proteinExistence type="inferred from homology"/>